<proteinExistence type="inferred from homology"/>
<comment type="catalytic activity">
    <reaction evidence="1">
        <text>thymidine + ATP = dTMP + ADP + H(+)</text>
        <dbReference type="Rhea" id="RHEA:19129"/>
        <dbReference type="ChEBI" id="CHEBI:15378"/>
        <dbReference type="ChEBI" id="CHEBI:17748"/>
        <dbReference type="ChEBI" id="CHEBI:30616"/>
        <dbReference type="ChEBI" id="CHEBI:63528"/>
        <dbReference type="ChEBI" id="CHEBI:456216"/>
        <dbReference type="EC" id="2.7.1.21"/>
    </reaction>
</comment>
<comment type="subunit">
    <text evidence="1">Homotetramer.</text>
</comment>
<comment type="subcellular location">
    <subcellularLocation>
        <location evidence="1">Cytoplasm</location>
    </subcellularLocation>
</comment>
<comment type="similarity">
    <text evidence="1">Belongs to the thymidine kinase family.</text>
</comment>
<feature type="chain" id="PRO_0000175024" description="Thymidine kinase">
    <location>
        <begin position="1"/>
        <end position="199"/>
    </location>
</feature>
<feature type="active site" description="Proton acceptor" evidence="1">
    <location>
        <position position="89"/>
    </location>
</feature>
<feature type="binding site" evidence="1">
    <location>
        <begin position="15"/>
        <end position="22"/>
    </location>
    <ligand>
        <name>ATP</name>
        <dbReference type="ChEBI" id="CHEBI:30616"/>
    </ligand>
</feature>
<feature type="binding site" evidence="1">
    <location>
        <begin position="88"/>
        <end position="91"/>
    </location>
    <ligand>
        <name>ATP</name>
        <dbReference type="ChEBI" id="CHEBI:30616"/>
    </ligand>
</feature>
<feature type="binding site" evidence="1">
    <location>
        <position position="145"/>
    </location>
    <ligand>
        <name>Zn(2+)</name>
        <dbReference type="ChEBI" id="CHEBI:29105"/>
    </ligand>
</feature>
<feature type="binding site" evidence="1">
    <location>
        <position position="148"/>
    </location>
    <ligand>
        <name>Zn(2+)</name>
        <dbReference type="ChEBI" id="CHEBI:29105"/>
    </ligand>
</feature>
<feature type="binding site" evidence="1">
    <location>
        <position position="183"/>
    </location>
    <ligand>
        <name>Zn(2+)</name>
        <dbReference type="ChEBI" id="CHEBI:29105"/>
    </ligand>
</feature>
<feature type="binding site" evidence="1">
    <location>
        <position position="186"/>
    </location>
    <ligand>
        <name>Zn(2+)</name>
        <dbReference type="ChEBI" id="CHEBI:29105"/>
    </ligand>
</feature>
<name>KITH_STAES</name>
<accession>Q8CRM9</accession>
<sequence>MYETYHSGWIETITGSMFSGKSEELIRRLRRGIYAKQKVVVFKPAIDDRYHKEKVVSHNGNEIEAINISTAQEILNHKLEEVNVIGIDEVQFFEDDIVNIVEKLAENGHRVIVAGLDMDFRGEPFKPMPKLLAVSEHITKLQAVCSVCGSPSSRTQRLINGEPAKVDDPIILVGANESYEPRCRAHHIVAPSENEKEEM</sequence>
<organism>
    <name type="scientific">Staphylococcus epidermidis (strain ATCC 12228 / FDA PCI 1200)</name>
    <dbReference type="NCBI Taxonomy" id="176280"/>
    <lineage>
        <taxon>Bacteria</taxon>
        <taxon>Bacillati</taxon>
        <taxon>Bacillota</taxon>
        <taxon>Bacilli</taxon>
        <taxon>Bacillales</taxon>
        <taxon>Staphylococcaceae</taxon>
        <taxon>Staphylococcus</taxon>
    </lineage>
</organism>
<keyword id="KW-0067">ATP-binding</keyword>
<keyword id="KW-0963">Cytoplasm</keyword>
<keyword id="KW-0237">DNA synthesis</keyword>
<keyword id="KW-0418">Kinase</keyword>
<keyword id="KW-0479">Metal-binding</keyword>
<keyword id="KW-0547">Nucleotide-binding</keyword>
<keyword id="KW-0808">Transferase</keyword>
<keyword id="KW-0862">Zinc</keyword>
<evidence type="ECO:0000255" key="1">
    <source>
        <dbReference type="HAMAP-Rule" id="MF_00124"/>
    </source>
</evidence>
<protein>
    <recommendedName>
        <fullName evidence="1">Thymidine kinase</fullName>
        <ecNumber evidence="1">2.7.1.21</ecNumber>
    </recommendedName>
</protein>
<gene>
    <name evidence="1" type="primary">tdk</name>
    <name type="ordered locus">SE_1717</name>
</gene>
<dbReference type="EC" id="2.7.1.21" evidence="1"/>
<dbReference type="EMBL" id="AE015929">
    <property type="protein sequence ID" value="AAO05316.1"/>
    <property type="molecule type" value="Genomic_DNA"/>
</dbReference>
<dbReference type="RefSeq" id="NP_765272.1">
    <property type="nucleotide sequence ID" value="NC_004461.1"/>
</dbReference>
<dbReference type="RefSeq" id="WP_001829979.1">
    <property type="nucleotide sequence ID" value="NZ_WBME01000021.1"/>
</dbReference>
<dbReference type="SMR" id="Q8CRM9"/>
<dbReference type="KEGG" id="sep:SE_1717"/>
<dbReference type="PATRIC" id="fig|176280.10.peg.1677"/>
<dbReference type="eggNOG" id="COG1435">
    <property type="taxonomic scope" value="Bacteria"/>
</dbReference>
<dbReference type="HOGENOM" id="CLU_064400_3_0_9"/>
<dbReference type="OrthoDB" id="9781579at2"/>
<dbReference type="Proteomes" id="UP000001411">
    <property type="component" value="Chromosome"/>
</dbReference>
<dbReference type="GO" id="GO:0005829">
    <property type="term" value="C:cytosol"/>
    <property type="evidence" value="ECO:0007669"/>
    <property type="project" value="TreeGrafter"/>
</dbReference>
<dbReference type="GO" id="GO:0005524">
    <property type="term" value="F:ATP binding"/>
    <property type="evidence" value="ECO:0007669"/>
    <property type="project" value="UniProtKB-UniRule"/>
</dbReference>
<dbReference type="GO" id="GO:0004797">
    <property type="term" value="F:thymidine kinase activity"/>
    <property type="evidence" value="ECO:0007669"/>
    <property type="project" value="UniProtKB-UniRule"/>
</dbReference>
<dbReference type="GO" id="GO:0008270">
    <property type="term" value="F:zinc ion binding"/>
    <property type="evidence" value="ECO:0007669"/>
    <property type="project" value="UniProtKB-UniRule"/>
</dbReference>
<dbReference type="GO" id="GO:0071897">
    <property type="term" value="P:DNA biosynthetic process"/>
    <property type="evidence" value="ECO:0007669"/>
    <property type="project" value="UniProtKB-KW"/>
</dbReference>
<dbReference type="GO" id="GO:0046104">
    <property type="term" value="P:thymidine metabolic process"/>
    <property type="evidence" value="ECO:0007669"/>
    <property type="project" value="TreeGrafter"/>
</dbReference>
<dbReference type="FunFam" id="3.30.60.20:FF:000026">
    <property type="entry name" value="Thymidine kinase"/>
    <property type="match status" value="1"/>
</dbReference>
<dbReference type="FunFam" id="3.40.50.300:FF:000384">
    <property type="entry name" value="Thymidine kinase"/>
    <property type="match status" value="1"/>
</dbReference>
<dbReference type="Gene3D" id="3.30.60.20">
    <property type="match status" value="1"/>
</dbReference>
<dbReference type="Gene3D" id="3.40.50.300">
    <property type="entry name" value="P-loop containing nucleotide triphosphate hydrolases"/>
    <property type="match status" value="1"/>
</dbReference>
<dbReference type="HAMAP" id="MF_00124">
    <property type="entry name" value="Thymidine_kinase"/>
    <property type="match status" value="1"/>
</dbReference>
<dbReference type="InterPro" id="IPR027417">
    <property type="entry name" value="P-loop_NTPase"/>
</dbReference>
<dbReference type="InterPro" id="IPR001267">
    <property type="entry name" value="Thymidine_kinase"/>
</dbReference>
<dbReference type="InterPro" id="IPR020633">
    <property type="entry name" value="Thymidine_kinase_CS"/>
</dbReference>
<dbReference type="NCBIfam" id="NF003296">
    <property type="entry name" value="PRK04296.1-1"/>
    <property type="match status" value="1"/>
</dbReference>
<dbReference type="PANTHER" id="PTHR11441">
    <property type="entry name" value="THYMIDINE KINASE"/>
    <property type="match status" value="1"/>
</dbReference>
<dbReference type="PANTHER" id="PTHR11441:SF0">
    <property type="entry name" value="THYMIDINE KINASE, CYTOSOLIC"/>
    <property type="match status" value="1"/>
</dbReference>
<dbReference type="Pfam" id="PF00265">
    <property type="entry name" value="TK"/>
    <property type="match status" value="1"/>
</dbReference>
<dbReference type="PIRSF" id="PIRSF035805">
    <property type="entry name" value="TK_cell"/>
    <property type="match status" value="1"/>
</dbReference>
<dbReference type="SUPFAM" id="SSF57716">
    <property type="entry name" value="Glucocorticoid receptor-like (DNA-binding domain)"/>
    <property type="match status" value="1"/>
</dbReference>
<dbReference type="SUPFAM" id="SSF52540">
    <property type="entry name" value="P-loop containing nucleoside triphosphate hydrolases"/>
    <property type="match status" value="1"/>
</dbReference>
<dbReference type="PROSITE" id="PS00603">
    <property type="entry name" value="TK_CELLULAR_TYPE"/>
    <property type="match status" value="1"/>
</dbReference>
<reference key="1">
    <citation type="journal article" date="2003" name="Mol. Microbiol.">
        <title>Genome-based analysis of virulence genes in a non-biofilm-forming Staphylococcus epidermidis strain (ATCC 12228).</title>
        <authorList>
            <person name="Zhang Y.-Q."/>
            <person name="Ren S.-X."/>
            <person name="Li H.-L."/>
            <person name="Wang Y.-X."/>
            <person name="Fu G."/>
            <person name="Yang J."/>
            <person name="Qin Z.-Q."/>
            <person name="Miao Y.-G."/>
            <person name="Wang W.-Y."/>
            <person name="Chen R.-S."/>
            <person name="Shen Y."/>
            <person name="Chen Z."/>
            <person name="Yuan Z.-H."/>
            <person name="Zhao G.-P."/>
            <person name="Qu D."/>
            <person name="Danchin A."/>
            <person name="Wen Y.-M."/>
        </authorList>
    </citation>
    <scope>NUCLEOTIDE SEQUENCE [LARGE SCALE GENOMIC DNA]</scope>
    <source>
        <strain>ATCC 12228 / FDA PCI 1200</strain>
    </source>
</reference>